<evidence type="ECO:0000250" key="1">
    <source>
        <dbReference type="UniProtKB" id="Q12051"/>
    </source>
</evidence>
<evidence type="ECO:0000269" key="2">
    <source>
    </source>
</evidence>
<evidence type="ECO:0000269" key="3">
    <source>
    </source>
</evidence>
<evidence type="ECO:0000269" key="4">
    <source>
    </source>
</evidence>
<evidence type="ECO:0000269" key="5">
    <source>
    </source>
</evidence>
<evidence type="ECO:0000303" key="6">
    <source>
    </source>
</evidence>
<evidence type="ECO:0000305" key="7"/>
<evidence type="ECO:0000305" key="8">
    <source>
    </source>
</evidence>
<proteinExistence type="evidence at transcript level"/>
<reference key="1">
    <citation type="journal article" date="2005" name="Mol. Genet. Genomics">
        <title>Molecular cloning and genetic analysis of a symbiosis-expressed gene cluster for lolitrem biosynthesis from a mutualistic endophyte of perennial ryegrass.</title>
        <authorList>
            <person name="Young C.A."/>
            <person name="Bryant M.K."/>
            <person name="Christensen M.J."/>
            <person name="Tapper B.A."/>
            <person name="Bryan G.T."/>
            <person name="Scott B."/>
        </authorList>
    </citation>
    <scope>NUCLEOTIDE SEQUENCE [GENOMIC DNA]</scope>
    <source>
        <strain>Lp19</strain>
    </source>
</reference>
<reference key="2">
    <citation type="journal article" date="2006" name="Fungal Genet. Biol.">
        <title>A complex gene cluster for indole-diterpene biosynthesis in the grass endophyte Neotyphodium lolii.</title>
        <authorList>
            <person name="Young C.A."/>
            <person name="Felitti S."/>
            <person name="Shields K."/>
            <person name="Spangenberg G."/>
            <person name="Johnson R.D."/>
            <person name="Bryan G.T."/>
            <person name="Saikia S."/>
            <person name="Scott B."/>
        </authorList>
    </citation>
    <scope>FUNCTION</scope>
    <source>
        <strain>Lp19</strain>
    </source>
</reference>
<reference key="3">
    <citation type="journal article" date="2010" name="Plant Physiol.">
        <title>Disruption of signaling in a fungal-grass symbiosis leads to pathogenesis.</title>
        <authorList>
            <person name="Eaton C.J."/>
            <person name="Cox M.P."/>
            <person name="Ambrose B."/>
            <person name="Becker M."/>
            <person name="Hesse U."/>
            <person name="Schardl C.L."/>
            <person name="Scott B."/>
        </authorList>
    </citation>
    <scope>INDUCTION</scope>
</reference>
<reference key="4">
    <citation type="journal article" date="2012" name="FEBS Lett.">
        <title>Functional analysis of an indole-diterpene gene cluster for lolitrem B biosynthesis in the grass endosymbiont Epichloe festucae.</title>
        <authorList>
            <person name="Saikia S."/>
            <person name="Takemoto D."/>
            <person name="Tapper B.A."/>
            <person name="Lane G.A."/>
            <person name="Fraser K."/>
            <person name="Scott B."/>
        </authorList>
    </citation>
    <scope>FUNCTION</scope>
</reference>
<gene>
    <name evidence="6" type="primary">ltmG</name>
</gene>
<sequence>MTMAANDFPFQCQEKKSYSQPSLVYCNGNIAETYLEEKVLTAPLDYLRALPSKDIRSGLTDAINEFLRVPEEKVLVIKRIIDLLHNASLLIDDIQDSSKLRRGVPVAHHIFGIAQTINSANLAYFIAQRELEKLTNPRAFAIYNEELINLHRGQGMELHWRESLHCPTEDEYLRMIQKKTGGLFRLAIRLLQGESASDDDYVSLIDTLGTLFQIRDDYQNLQSDIYSKNKGYCEDLTEGKFSYPVIHSIRSRPGDVRLINILKQRSEDVMVKQYAVQHIESTGSFAFCQNKIQSLVEQAREQLAALENSSSCGGPVRDILDKLAIKPRANIEVE</sequence>
<organism>
    <name type="scientific">Epichloe festucae var. lolii</name>
    <name type="common">Neotyphodium lolii</name>
    <name type="synonym">Acremonium lolii</name>
    <dbReference type="NCBI Taxonomy" id="73839"/>
    <lineage>
        <taxon>Eukaryota</taxon>
        <taxon>Fungi</taxon>
        <taxon>Dikarya</taxon>
        <taxon>Ascomycota</taxon>
        <taxon>Pezizomycotina</taxon>
        <taxon>Sordariomycetes</taxon>
        <taxon>Hypocreomycetidae</taxon>
        <taxon>Hypocreales</taxon>
        <taxon>Clavicipitaceae</taxon>
        <taxon>Epichloe</taxon>
    </lineage>
</organism>
<keyword id="KW-0460">Magnesium</keyword>
<keyword id="KW-0479">Metal-binding</keyword>
<keyword id="KW-0808">Transferase</keyword>
<name>LTMG_EPIFI</name>
<accession>Q56RZ7</accession>
<dbReference type="EC" id="2.5.1.-" evidence="7"/>
<dbReference type="EC" id="2.5.1.1" evidence="1"/>
<dbReference type="EC" id="2.5.1.29" evidence="1"/>
<dbReference type="EC" id="2.5.1.10" evidence="1"/>
<dbReference type="EMBL" id="AY742903">
    <property type="protein sequence ID" value="AAW88510.1"/>
    <property type="molecule type" value="Genomic_DNA"/>
</dbReference>
<dbReference type="SMR" id="Q56RZ7"/>
<dbReference type="GO" id="GO:0004337">
    <property type="term" value="F:(2E,6E)-farnesyl diphosphate synthase activity"/>
    <property type="evidence" value="ECO:0007669"/>
    <property type="project" value="UniProtKB-EC"/>
</dbReference>
<dbReference type="GO" id="GO:0004161">
    <property type="term" value="F:dimethylallyltranstransferase activity"/>
    <property type="evidence" value="ECO:0007669"/>
    <property type="project" value="UniProtKB-EC"/>
</dbReference>
<dbReference type="GO" id="GO:0004311">
    <property type="term" value="F:geranylgeranyl diphosphate synthase activity"/>
    <property type="evidence" value="ECO:0007669"/>
    <property type="project" value="UniProtKB-EC"/>
</dbReference>
<dbReference type="GO" id="GO:0046872">
    <property type="term" value="F:metal ion binding"/>
    <property type="evidence" value="ECO:0007669"/>
    <property type="project" value="UniProtKB-KW"/>
</dbReference>
<dbReference type="GO" id="GO:0046165">
    <property type="term" value="P:alcohol biosynthetic process"/>
    <property type="evidence" value="ECO:0007669"/>
    <property type="project" value="UniProtKB-ARBA"/>
</dbReference>
<dbReference type="GO" id="GO:0008299">
    <property type="term" value="P:isoprenoid biosynthetic process"/>
    <property type="evidence" value="ECO:0007669"/>
    <property type="project" value="InterPro"/>
</dbReference>
<dbReference type="GO" id="GO:0043386">
    <property type="term" value="P:mycotoxin biosynthetic process"/>
    <property type="evidence" value="ECO:0007669"/>
    <property type="project" value="UniProtKB-ARBA"/>
</dbReference>
<dbReference type="CDD" id="cd00685">
    <property type="entry name" value="Trans_IPPS_HT"/>
    <property type="match status" value="1"/>
</dbReference>
<dbReference type="Gene3D" id="1.10.600.10">
    <property type="entry name" value="Farnesyl Diphosphate Synthase"/>
    <property type="match status" value="1"/>
</dbReference>
<dbReference type="InterPro" id="IPR008949">
    <property type="entry name" value="Isoprenoid_synthase_dom_sf"/>
</dbReference>
<dbReference type="InterPro" id="IPR000092">
    <property type="entry name" value="Polyprenyl_synt"/>
</dbReference>
<dbReference type="InterPro" id="IPR033749">
    <property type="entry name" value="Polyprenyl_synt_CS"/>
</dbReference>
<dbReference type="PANTHER" id="PTHR12001">
    <property type="entry name" value="GERANYLGERANYL PYROPHOSPHATE SYNTHASE"/>
    <property type="match status" value="1"/>
</dbReference>
<dbReference type="PANTHER" id="PTHR12001:SF70">
    <property type="entry name" value="PYROPHOSPHATE SYNTHETASE ATMG, PUTATIVE (AFU_ORTHOLOGUE AFUA_8G02400)-RELATED"/>
    <property type="match status" value="1"/>
</dbReference>
<dbReference type="Pfam" id="PF00348">
    <property type="entry name" value="polyprenyl_synt"/>
    <property type="match status" value="1"/>
</dbReference>
<dbReference type="SFLD" id="SFLDS00005">
    <property type="entry name" value="Isoprenoid_Synthase_Type_I"/>
    <property type="match status" value="1"/>
</dbReference>
<dbReference type="SUPFAM" id="SSF48576">
    <property type="entry name" value="Terpenoid synthases"/>
    <property type="match status" value="1"/>
</dbReference>
<dbReference type="PROSITE" id="PS00723">
    <property type="entry name" value="POLYPRENYL_SYNTHASE_1"/>
    <property type="match status" value="1"/>
</dbReference>
<dbReference type="PROSITE" id="PS00444">
    <property type="entry name" value="POLYPRENYL_SYNTHASE_2"/>
    <property type="match status" value="1"/>
</dbReference>
<comment type="function">
    <text evidence="2 3 5">Geranylgeranyl pyrophosphate synthase; part of the gene cluster that mediates the biosynthesis of lolitrems, indole-diterpene mycotoxins that are potent tremorgens in mammals, and are synthesized by clavicipitaceous fungal endophytes in association with their grass hosts (PubMed:16765617). The geranylgeranyl diphosphate (GGPP) synthase ltmG is proposed to catalyze the first step in lolitremB biosynthesis (PubMed:15991026, PubMed:16765617). LtmG catalyzes a series of iterative condensations of isopentenyl diphosphate (IPP) with dimethylallyl diphosphate (DMAPP), geranyl diphosphate (GPP), and farnesyl diphosphate (FPP), to form GGPP (PubMed:15991026, PubMed:16765617). GGPP then condenses with indole-3-glycerol phosphate to form 3-geranylgeranylindole, an acyclic intermediate, to be incorporated into paxilline (PubMed:16765617). Either ltmG or ltmC could be responsible for this step, as both are putative prenyl transferases (PubMed:16765617). The FAD-dependent monooxygenase ltmM then catalyzes the epoxidation of the two terminal alkenes of the geranylgeranyl moiety, which is subsequently cyclized by ltmB, to paspaline (PubMed:15991026, PubMed:16765617). The cytochrome P450 monooxygenases ltmQ and ltmP can sequentially oxidize paspaline to terpendole E and terpendole F (PubMed:22750140). Alternatively, ltmP converts paspaline to an intermediate which is oxidized by ltmQ to terpendole F (PubMed:22750140). LtmF, ltmK, ltmE and ltmJ appear to be unique to the epichloe endophytes (PubMed:15991026, PubMed:16765617). The prenyltransferase ltmF is involved in the 27-hydroxyl-O-prenylation (PubMed:22750140). The cytochrome P450 monooxygenase ltmK is required for the oxidative acetal ring formation (PubMed:22750140). The multi-functional prenyltransferase ltmE is required for C20- and C21-prenylations of the indole ring of paspalanes and acts together with the cytochrome P450 monooxygenase ltmJ to yield lolitremanes by multiple oxidations and ring closures (PubMed:22750140). The stereoisomer pairs of lolitriol and lolitrem N or lolitrem B and lolitrem F may be attributed to variations in the way in which ring closure can occur under the action of ltmJ (PubMed:22750140). While the major product of this pathway is lolitrem B, the prenyl transferases and cytochrome P450 monooxygenases identified in this pathway have a remarkable versatility in their regio- and stereo-specificities to generate a diverse range of metabolites that are products of a metabolic grid rather than a linear pathway (PubMed:22750140).</text>
</comment>
<comment type="catalytic activity">
    <reaction evidence="1">
        <text>isopentenyl diphosphate + dimethylallyl diphosphate = (2E)-geranyl diphosphate + diphosphate</text>
        <dbReference type="Rhea" id="RHEA:22408"/>
        <dbReference type="ChEBI" id="CHEBI:33019"/>
        <dbReference type="ChEBI" id="CHEBI:57623"/>
        <dbReference type="ChEBI" id="CHEBI:58057"/>
        <dbReference type="ChEBI" id="CHEBI:128769"/>
        <dbReference type="EC" id="2.5.1.1"/>
    </reaction>
</comment>
<comment type="catalytic activity">
    <reaction evidence="1">
        <text>isopentenyl diphosphate + (2E)-geranyl diphosphate = (2E,6E)-farnesyl diphosphate + diphosphate</text>
        <dbReference type="Rhea" id="RHEA:19361"/>
        <dbReference type="ChEBI" id="CHEBI:33019"/>
        <dbReference type="ChEBI" id="CHEBI:58057"/>
        <dbReference type="ChEBI" id="CHEBI:128769"/>
        <dbReference type="ChEBI" id="CHEBI:175763"/>
        <dbReference type="EC" id="2.5.1.10"/>
    </reaction>
</comment>
<comment type="catalytic activity">
    <reaction evidence="1">
        <text>isopentenyl diphosphate + (2E,6E)-farnesyl diphosphate = (2E,6E,10E)-geranylgeranyl diphosphate + diphosphate</text>
        <dbReference type="Rhea" id="RHEA:17653"/>
        <dbReference type="ChEBI" id="CHEBI:33019"/>
        <dbReference type="ChEBI" id="CHEBI:58756"/>
        <dbReference type="ChEBI" id="CHEBI:128769"/>
        <dbReference type="ChEBI" id="CHEBI:175763"/>
        <dbReference type="EC" id="2.5.1.29"/>
    </reaction>
</comment>
<comment type="cofactor">
    <cofactor evidence="1">
        <name>Mg(2+)</name>
        <dbReference type="ChEBI" id="CHEBI:18420"/>
    </cofactor>
    <text evidence="1">Binds 3 Mg(2+) ions per subunit.</text>
</comment>
<comment type="pathway">
    <text evidence="8">Secondary metabolite biosynthesis.</text>
</comment>
<comment type="induction">
    <text evidence="4">Expression is down-regulated when the stress-activated mitogen-activated protein kinase (sakA) is deleted (PubMed:20519633).</text>
</comment>
<comment type="similarity">
    <text evidence="7">Belongs to the FPP/GGPP synthase family.</text>
</comment>
<feature type="chain" id="PRO_0000444326" description="Geranylgeranyl pyrophosphate synthase ltmG">
    <location>
        <begin position="1"/>
        <end position="334"/>
    </location>
</feature>
<feature type="binding site" evidence="1">
    <location>
        <position position="53"/>
    </location>
    <ligand>
        <name>isopentenyl diphosphate</name>
        <dbReference type="ChEBI" id="CHEBI:128769"/>
    </ligand>
</feature>
<feature type="binding site" evidence="1">
    <location>
        <position position="56"/>
    </location>
    <ligand>
        <name>isopentenyl diphosphate</name>
        <dbReference type="ChEBI" id="CHEBI:128769"/>
    </ligand>
</feature>
<feature type="binding site" evidence="1">
    <location>
        <position position="85"/>
    </location>
    <ligand>
        <name>isopentenyl diphosphate</name>
        <dbReference type="ChEBI" id="CHEBI:128769"/>
    </ligand>
</feature>
<feature type="binding site" evidence="1">
    <location>
        <position position="92"/>
    </location>
    <ligand>
        <name>Mg(2+)</name>
        <dbReference type="ChEBI" id="CHEBI:18420"/>
        <label>1</label>
    </ligand>
</feature>
<feature type="binding site" evidence="1">
    <location>
        <position position="92"/>
    </location>
    <ligand>
        <name>Mg(2+)</name>
        <dbReference type="ChEBI" id="CHEBI:18420"/>
        <label>2</label>
    </ligand>
</feature>
<feature type="binding site" evidence="1">
    <location>
        <position position="96"/>
    </location>
    <ligand>
        <name>Mg(2+)</name>
        <dbReference type="ChEBI" id="CHEBI:18420"/>
        <label>1</label>
    </ligand>
</feature>
<feature type="binding site" evidence="1">
    <location>
        <position position="96"/>
    </location>
    <ligand>
        <name>Mg(2+)</name>
        <dbReference type="ChEBI" id="CHEBI:18420"/>
        <label>2</label>
    </ligand>
</feature>
<feature type="binding site" evidence="1">
    <location>
        <position position="101"/>
    </location>
    <ligand>
        <name>dimethylallyl diphosphate</name>
        <dbReference type="ChEBI" id="CHEBI:57623"/>
    </ligand>
</feature>
<feature type="binding site" evidence="1">
    <location>
        <position position="102"/>
    </location>
    <ligand>
        <name>isopentenyl diphosphate</name>
        <dbReference type="ChEBI" id="CHEBI:128769"/>
    </ligand>
</feature>
<feature type="binding site" evidence="1">
    <location>
        <position position="179"/>
    </location>
    <ligand>
        <name>dimethylallyl diphosphate</name>
        <dbReference type="ChEBI" id="CHEBI:57623"/>
    </ligand>
</feature>
<feature type="binding site" evidence="1">
    <location>
        <position position="180"/>
    </location>
    <ligand>
        <name>dimethylallyl diphosphate</name>
        <dbReference type="ChEBI" id="CHEBI:57623"/>
    </ligand>
</feature>
<feature type="binding site" evidence="1">
    <location>
        <position position="213"/>
    </location>
    <ligand>
        <name>dimethylallyl diphosphate</name>
        <dbReference type="ChEBI" id="CHEBI:57623"/>
    </ligand>
</feature>
<feature type="binding site" evidence="1">
    <location>
        <position position="216"/>
    </location>
    <ligand>
        <name>Mg(2+)</name>
        <dbReference type="ChEBI" id="CHEBI:18420"/>
        <label>3</label>
    </ligand>
</feature>
<feature type="binding site" evidence="1">
    <location>
        <position position="220"/>
    </location>
    <ligand>
        <name>dimethylallyl diphosphate</name>
        <dbReference type="ChEBI" id="CHEBI:57623"/>
    </ligand>
</feature>
<feature type="binding site" evidence="1">
    <location>
        <position position="230"/>
    </location>
    <ligand>
        <name>dimethylallyl diphosphate</name>
        <dbReference type="ChEBI" id="CHEBI:57623"/>
    </ligand>
</feature>
<feature type="binding site" evidence="1">
    <location>
        <position position="240"/>
    </location>
    <ligand>
        <name>dimethylallyl diphosphate</name>
        <dbReference type="ChEBI" id="CHEBI:57623"/>
    </ligand>
</feature>
<feature type="site" description="Important for determining product chain length" evidence="1">
    <location>
        <position position="124"/>
    </location>
</feature>
<protein>
    <recommendedName>
        <fullName evidence="1">Geranylgeranyl pyrophosphate synthase ltmG</fullName>
        <shortName evidence="7">GGPP synthase</shortName>
        <shortName evidence="7">GGPPSase</shortName>
        <ecNumber evidence="7">2.5.1.-</ecNumber>
    </recommendedName>
    <alternativeName>
        <fullName evidence="1">(2E,6E)-farnesyl diphosphate synthase</fullName>
    </alternativeName>
    <alternativeName>
        <fullName evidence="1">Dimethylallyltranstransferase</fullName>
        <ecNumber evidence="1">2.5.1.1</ecNumber>
    </alternativeName>
    <alternativeName>
        <fullName evidence="1">Farnesyl diphosphate synthase</fullName>
    </alternativeName>
    <alternativeName>
        <fullName evidence="1">Farnesyltranstransferase</fullName>
        <ecNumber evidence="1">2.5.1.29</ecNumber>
    </alternativeName>
    <alternativeName>
        <fullName evidence="1">Geranylgeranyl diphosphate synthase</fullName>
    </alternativeName>
    <alternativeName>
        <fullName evidence="1">Geranyltranstransferase</fullName>
        <ecNumber evidence="1">2.5.1.10</ecNumber>
    </alternativeName>
    <alternativeName>
        <fullName evidence="6">Lolitrem B biosynthesis cluster 1 protein G</fullName>
    </alternativeName>
</protein>